<accession>Q7TLC4</accession>
<keyword id="KW-0244">Early protein</keyword>
<keyword id="KW-1035">Host cytoplasm</keyword>
<keyword id="KW-1048">Host nucleus</keyword>
<keyword id="KW-0945">Host-virus interaction</keyword>
<keyword id="KW-1080">Inhibition of host adaptive immune response by virus</keyword>
<keyword id="KW-1107">Inhibition of host TAP by virus</keyword>
<keyword id="KW-0899">Viral immunoevasion</keyword>
<name>ICP47_CHV16</name>
<reference key="1">
    <citation type="journal article" date="2003" name="J. Gen. Virol.">
        <title>The genome of herpesvirus papio 2 is closely related to the genomes of human herpes simplex viruses.</title>
        <authorList>
            <person name="Bigger J.E."/>
            <person name="Martin D.W."/>
        </authorList>
    </citation>
    <scope>NUCLEOTIDE SEQUENCE [GENOMIC DNA]</scope>
    <source>
        <strain>Isolate 860</strain>
    </source>
</reference>
<dbReference type="EMBL" id="AY288071">
    <property type="protein sequence ID" value="AAP37045.1"/>
    <property type="molecule type" value="Genomic_DNA"/>
</dbReference>
<dbReference type="RefSeq" id="YP_443919.1">
    <property type="nucleotide sequence ID" value="NC_007653.1"/>
</dbReference>
<dbReference type="SMR" id="Q7TLC4"/>
<dbReference type="TCDB" id="8.A.72.1.2">
    <property type="family name" value="the immune evasion protein, icp47 (icp47) family"/>
</dbReference>
<dbReference type="GeneID" id="3850189"/>
<dbReference type="KEGG" id="vg:3850189"/>
<dbReference type="GO" id="GO:0030430">
    <property type="term" value="C:host cell cytoplasm"/>
    <property type="evidence" value="ECO:0007669"/>
    <property type="project" value="UniProtKB-SubCell"/>
</dbReference>
<dbReference type="GO" id="GO:0042025">
    <property type="term" value="C:host cell nucleus"/>
    <property type="evidence" value="ECO:0007669"/>
    <property type="project" value="UniProtKB-SubCell"/>
</dbReference>
<dbReference type="GO" id="GO:0039588">
    <property type="term" value="P:symbiont-mediated suppression of host antigen processing and presentation"/>
    <property type="evidence" value="ECO:0007669"/>
    <property type="project" value="UniProtKB-KW"/>
</dbReference>
<dbReference type="InterPro" id="IPR008026">
    <property type="entry name" value="Herpes_ICP47"/>
</dbReference>
<dbReference type="Pfam" id="PF05363">
    <property type="entry name" value="Herpes_US12"/>
    <property type="match status" value="1"/>
</dbReference>
<proteinExistence type="inferred from homology"/>
<feature type="chain" id="PRO_0000115813" description="ICP47 protein">
    <location>
        <begin position="1"/>
        <end position="78"/>
    </location>
</feature>
<feature type="region of interest" description="Active domain" evidence="2">
    <location>
        <begin position="3"/>
        <end position="36"/>
    </location>
</feature>
<feature type="region of interest" description="Disordered" evidence="3">
    <location>
        <begin position="38"/>
        <end position="78"/>
    </location>
</feature>
<feature type="compositionally biased region" description="Basic and acidic residues" evidence="3">
    <location>
        <begin position="38"/>
        <end position="50"/>
    </location>
</feature>
<gene>
    <name type="primary">US12</name>
</gene>
<evidence type="ECO:0000250" key="1">
    <source>
        <dbReference type="UniProtKB" id="P03170"/>
    </source>
</evidence>
<evidence type="ECO:0000250" key="2">
    <source>
        <dbReference type="UniProtKB" id="P14345"/>
    </source>
</evidence>
<evidence type="ECO:0000256" key="3">
    <source>
        <dbReference type="SAM" id="MobiDB-lite"/>
    </source>
</evidence>
<evidence type="ECO:0000305" key="4"/>
<comment type="function">
    <text evidence="1">Plays a role in the inhibition of host immune response. Binds specifically to transporters associated with antigen processing (TAP), thereby blocking peptide-binding and translocation by TAP as well as subsequent loading of peptides onto MHC class I molecules. Empty MHC I molecules are retained in the endoplasmic reticulum and ultimately directed to proteasomal degradation. In consequence, infected cells are masked for immune recognition by cytotoxic T-lymphocytes.</text>
</comment>
<comment type="subunit">
    <text evidence="1">Interacts with host TAP1 and TAP2; these interactions inhibit the loading of peptides onto MHC class I molecules.</text>
</comment>
<comment type="subcellular location">
    <subcellularLocation>
        <location evidence="1">Host cytoplasm</location>
    </subcellularLocation>
    <subcellularLocation>
        <location evidence="1">Host nucleus</location>
    </subcellularLocation>
</comment>
<comment type="domain">
    <text evidence="2">The N-terminal active domain blocks peptide binding to and peptide transport by TAP.</text>
</comment>
<comment type="similarity">
    <text evidence="4">Belongs to the herpesviridae US12 family.</text>
</comment>
<organism>
    <name type="scientific">Cercopithecine herpesvirus 16</name>
    <name type="common">CeHV-16</name>
    <name type="synonym">Herpesvirus papio 2</name>
    <dbReference type="NCBI Taxonomy" id="340907"/>
    <lineage>
        <taxon>Viruses</taxon>
        <taxon>Duplodnaviria</taxon>
        <taxon>Heunggongvirae</taxon>
        <taxon>Peploviricota</taxon>
        <taxon>Herviviricetes</taxon>
        <taxon>Herpesvirales</taxon>
        <taxon>Orthoherpesviridae</taxon>
        <taxon>Alphaherpesvirinae</taxon>
        <taxon>Simplexvirus</taxon>
        <taxon>Simplexvirus papiinealpha2</taxon>
    </lineage>
</organism>
<protein>
    <recommendedName>
        <fullName>ICP47 protein</fullName>
    </recommendedName>
    <alternativeName>
        <fullName>Immediate-early protein IE12</fullName>
    </alternativeName>
    <alternativeName>
        <fullName>Immediate-early-5</fullName>
    </alternativeName>
    <alternativeName>
        <fullName>Infected cell protein 47</fullName>
    </alternativeName>
    <alternativeName>
        <fullName>US12 protein</fullName>
    </alternativeName>
    <alternativeName>
        <fullName>Vmw12</fullName>
    </alternativeName>
</protein>
<sequence length="78" mass="8567">MSSLYLAEVDAFLQSPRTRHRTCADLRRELDAYADEERREAAKAIAHPDRPLLAPPSAPPDRSRPAPRGTAHPPAASP</sequence>
<organismHost>
    <name type="scientific">Homo sapiens</name>
    <name type="common">Human</name>
    <dbReference type="NCBI Taxonomy" id="9606"/>
</organismHost>
<organismHost>
    <name type="scientific">Macaca fascicularis</name>
    <name type="common">Crab-eating macaque</name>
    <name type="synonym">Cynomolgus monkey</name>
    <dbReference type="NCBI Taxonomy" id="9541"/>
</organismHost>
<organismHost>
    <name type="scientific">Macaca leonina</name>
    <name type="common">Northern pig-tailed macaque</name>
    <name type="synonym">Macaca nemestrina leonina</name>
    <dbReference type="NCBI Taxonomy" id="90387"/>
</organismHost>
<organismHost>
    <name type="scientific">Macaca mulatta</name>
    <name type="common">Rhesus macaque</name>
    <dbReference type="NCBI Taxonomy" id="9544"/>
</organismHost>
<organismHost>
    <name type="scientific">Macaca nemestrina</name>
    <name type="common">Pig-tailed macaque</name>
    <dbReference type="NCBI Taxonomy" id="9545"/>
</organismHost>